<accession>Q7RTZ2</accession>
<evidence type="ECO:0000250" key="1"/>
<evidence type="ECO:0000255" key="2">
    <source>
        <dbReference type="PROSITE-ProRule" id="PRU10093"/>
    </source>
</evidence>
<evidence type="ECO:0000256" key="3">
    <source>
        <dbReference type="SAM" id="MobiDB-lite"/>
    </source>
</evidence>
<evidence type="ECO:0000305" key="4"/>
<reference key="1">
    <citation type="journal article" date="2006" name="Nature">
        <title>DNA sequence and analysis of human chromosome 8.</title>
        <authorList>
            <person name="Nusbaum C."/>
            <person name="Mikkelsen T.S."/>
            <person name="Zody M.C."/>
            <person name="Asakawa S."/>
            <person name="Taudien S."/>
            <person name="Garber M."/>
            <person name="Kodira C.D."/>
            <person name="Schueler M.G."/>
            <person name="Shimizu A."/>
            <person name="Whittaker C.A."/>
            <person name="Chang J.L."/>
            <person name="Cuomo C.A."/>
            <person name="Dewar K."/>
            <person name="FitzGerald M.G."/>
            <person name="Yang X."/>
            <person name="Allen N.R."/>
            <person name="Anderson S."/>
            <person name="Asakawa T."/>
            <person name="Blechschmidt K."/>
            <person name="Bloom T."/>
            <person name="Borowsky M.L."/>
            <person name="Butler J."/>
            <person name="Cook A."/>
            <person name="Corum B."/>
            <person name="DeArellano K."/>
            <person name="DeCaprio D."/>
            <person name="Dooley K.T."/>
            <person name="Dorris L. III"/>
            <person name="Engels R."/>
            <person name="Gloeckner G."/>
            <person name="Hafez N."/>
            <person name="Hagopian D.S."/>
            <person name="Hall J.L."/>
            <person name="Ishikawa S.K."/>
            <person name="Jaffe D.B."/>
            <person name="Kamat A."/>
            <person name="Kudoh J."/>
            <person name="Lehmann R."/>
            <person name="Lokitsang T."/>
            <person name="Macdonald P."/>
            <person name="Major J.E."/>
            <person name="Matthews C.D."/>
            <person name="Mauceli E."/>
            <person name="Menzel U."/>
            <person name="Mihalev A.H."/>
            <person name="Minoshima S."/>
            <person name="Murayama Y."/>
            <person name="Naylor J.W."/>
            <person name="Nicol R."/>
            <person name="Nguyen C."/>
            <person name="O'Leary S.B."/>
            <person name="O'Neill K."/>
            <person name="Parker S.C.J."/>
            <person name="Polley A."/>
            <person name="Raymond C.K."/>
            <person name="Reichwald K."/>
            <person name="Rodriguez J."/>
            <person name="Sasaki T."/>
            <person name="Schilhabel M."/>
            <person name="Siddiqui R."/>
            <person name="Smith C.L."/>
            <person name="Sneddon T.P."/>
            <person name="Talamas J.A."/>
            <person name="Tenzin P."/>
            <person name="Topham K."/>
            <person name="Venkataraman V."/>
            <person name="Wen G."/>
            <person name="Yamazaki S."/>
            <person name="Young S.K."/>
            <person name="Zeng Q."/>
            <person name="Zimmer A.R."/>
            <person name="Rosenthal A."/>
            <person name="Birren B.W."/>
            <person name="Platzer M."/>
            <person name="Shimizu N."/>
            <person name="Lander E.S."/>
        </authorList>
    </citation>
    <scope>NUCLEOTIDE SEQUENCE [LARGE SCALE GENOMIC DNA]</scope>
</reference>
<reference key="2">
    <citation type="journal article" date="2003" name="Nat. Rev. Genet.">
        <title>Human and mouse proteases: a comparative genomic approach.</title>
        <authorList>
            <person name="Puente X.S."/>
            <person name="Sanchez L.M."/>
            <person name="Overall C.M."/>
            <person name="Lopez-Otin C."/>
        </authorList>
    </citation>
    <scope>IDENTIFICATION</scope>
</reference>
<reference key="3">
    <citation type="journal article" date="2005" name="Genomics">
        <title>The DUB/USP17 deubiquitinating enzymes, a multigene family within a tandemly repeated sequence.</title>
        <authorList>
            <person name="Burrows J.F."/>
            <person name="McGrattan M.J."/>
            <person name="Johnston J.A."/>
        </authorList>
    </citation>
    <scope>NOMENCLATURE</scope>
</reference>
<reference key="4">
    <citation type="journal article" date="2006" name="BMC Genomics">
        <title>Hyaluronan- and RNA-binding deubiquitinating enzymes of USP17 family members associated with cell viability.</title>
        <authorList>
            <person name="Shin J.-M."/>
            <person name="Yoo K.-J."/>
            <person name="Kim M.-S."/>
            <person name="Kim D."/>
            <person name="Baek K.-H."/>
        </authorList>
    </citation>
    <scope>NOMENCLATURE</scope>
</reference>
<protein>
    <recommendedName>
        <fullName>Ubiquitin carboxyl-terminal hydrolase 17-like protein 1</fullName>
        <ecNumber>3.4.19.12</ecNumber>
    </recommendedName>
    <alternativeName>
        <fullName>Deubiquitinating enzyme 17-like protein 1</fullName>
    </alternativeName>
    <alternativeName>
        <fullName>Ubiquitin thioesterase 17-like protein 1</fullName>
    </alternativeName>
    <alternativeName>
        <fullName>Ubiquitin-specific-processing protease 17-like protein 1</fullName>
    </alternativeName>
</protein>
<dbReference type="EC" id="3.4.19.12"/>
<dbReference type="EMBL" id="AF228730">
    <property type="status" value="NOT_ANNOTATED_CDS"/>
    <property type="molecule type" value="Genomic_DNA"/>
</dbReference>
<dbReference type="EMBL" id="BN000116">
    <property type="protein sequence ID" value="CAD66056.1"/>
    <property type="molecule type" value="Genomic_DNA"/>
</dbReference>
<dbReference type="CCDS" id="CCDS78298.1"/>
<dbReference type="RefSeq" id="NP_001243802.1">
    <property type="nucleotide sequence ID" value="NM_001256873.1"/>
</dbReference>
<dbReference type="SMR" id="Q7RTZ2"/>
<dbReference type="BioGRID" id="135086">
    <property type="interactions" value="3"/>
</dbReference>
<dbReference type="FunCoup" id="Q7RTZ2">
    <property type="interactions" value="445"/>
</dbReference>
<dbReference type="IntAct" id="Q7RTZ2">
    <property type="interactions" value="1"/>
</dbReference>
<dbReference type="STRING" id="9606.ENSP00000485364"/>
<dbReference type="MEROPS" id="C19.078"/>
<dbReference type="MEROPS" id="C19.A84"/>
<dbReference type="GlyGen" id="Q7RTZ2">
    <property type="glycosylation" value="1 site, 1 O-linked glycan (1 site)"/>
</dbReference>
<dbReference type="iPTMnet" id="Q7RTZ2"/>
<dbReference type="PhosphoSitePlus" id="Q7RTZ2"/>
<dbReference type="BioMuta" id="USP17L1"/>
<dbReference type="DMDM" id="74723224"/>
<dbReference type="jPOST" id="Q7RTZ2"/>
<dbReference type="MassIVE" id="Q7RTZ2"/>
<dbReference type="PaxDb" id="9606-ENSP00000485364"/>
<dbReference type="ProteomicsDB" id="68942"/>
<dbReference type="Antibodypedia" id="76807">
    <property type="antibodies" value="17 antibodies from 10 providers"/>
</dbReference>
<dbReference type="DNASU" id="401447"/>
<dbReference type="Ensembl" id="ENST00000529559.1">
    <property type="protein sequence ID" value="ENSP00000485364.1"/>
    <property type="gene ID" value="ENSG00000230549.3"/>
</dbReference>
<dbReference type="GeneID" id="401447"/>
<dbReference type="KEGG" id="hsa:401447"/>
<dbReference type="MANE-Select" id="ENST00000529559.1">
    <property type="protein sequence ID" value="ENSP00000485364.1"/>
    <property type="RefSeq nucleotide sequence ID" value="NM_001256873.1"/>
    <property type="RefSeq protein sequence ID" value="NP_001243802.1"/>
</dbReference>
<dbReference type="UCSC" id="uc031taa.1">
    <property type="organism name" value="human"/>
</dbReference>
<dbReference type="AGR" id="HGNC:37182"/>
<dbReference type="CTD" id="401447"/>
<dbReference type="GeneCards" id="USP17L1"/>
<dbReference type="HGNC" id="HGNC:37182">
    <property type="gene designation" value="USP17L1"/>
</dbReference>
<dbReference type="HPA" id="ENSG00000230549">
    <property type="expression patterns" value="Not detected"/>
</dbReference>
<dbReference type="neXtProt" id="NX_Q7RTZ2"/>
<dbReference type="OpenTargets" id="ENSG00000230549"/>
<dbReference type="VEuPathDB" id="HostDB:ENSG00000230549"/>
<dbReference type="eggNOG" id="KOG1865">
    <property type="taxonomic scope" value="Eukaryota"/>
</dbReference>
<dbReference type="GeneTree" id="ENSGT00940000161948"/>
<dbReference type="HOGENOM" id="CLU_008279_10_0_1"/>
<dbReference type="InParanoid" id="Q7RTZ2"/>
<dbReference type="OrthoDB" id="9523253at2759"/>
<dbReference type="PAN-GO" id="Q7RTZ2">
    <property type="GO annotations" value="6 GO annotations based on evolutionary models"/>
</dbReference>
<dbReference type="PhylomeDB" id="Q7RTZ2"/>
<dbReference type="PathwayCommons" id="Q7RTZ2"/>
<dbReference type="Reactome" id="R-HSA-5689880">
    <property type="pathway name" value="Ub-specific processing proteases"/>
</dbReference>
<dbReference type="SignaLink" id="Q7RTZ2"/>
<dbReference type="BioGRID-ORCS" id="401447">
    <property type="hits" value="10 hits in 200 CRISPR screens"/>
</dbReference>
<dbReference type="GenomeRNAi" id="401447"/>
<dbReference type="Pharos" id="Q7RTZ2">
    <property type="development level" value="Tdark"/>
</dbReference>
<dbReference type="PRO" id="PR:Q7RTZ2"/>
<dbReference type="Proteomes" id="UP000005640">
    <property type="component" value="Chromosome 8"/>
</dbReference>
<dbReference type="RNAct" id="Q7RTZ2">
    <property type="molecule type" value="protein"/>
</dbReference>
<dbReference type="Bgee" id="ENSG00000230549">
    <property type="expression patterns" value="Expressed in ventricular zone and 8 other cell types or tissues"/>
</dbReference>
<dbReference type="GO" id="GO:0005829">
    <property type="term" value="C:cytosol"/>
    <property type="evidence" value="ECO:0000318"/>
    <property type="project" value="GO_Central"/>
</dbReference>
<dbReference type="GO" id="GO:0005783">
    <property type="term" value="C:endoplasmic reticulum"/>
    <property type="evidence" value="ECO:0007669"/>
    <property type="project" value="UniProtKB-SubCell"/>
</dbReference>
<dbReference type="GO" id="GO:0005634">
    <property type="term" value="C:nucleus"/>
    <property type="evidence" value="ECO:0000318"/>
    <property type="project" value="GO_Central"/>
</dbReference>
<dbReference type="GO" id="GO:0004843">
    <property type="term" value="F:cysteine-type deubiquitinase activity"/>
    <property type="evidence" value="ECO:0000318"/>
    <property type="project" value="GO_Central"/>
</dbReference>
<dbReference type="GO" id="GO:0006915">
    <property type="term" value="P:apoptotic process"/>
    <property type="evidence" value="ECO:0007669"/>
    <property type="project" value="UniProtKB-KW"/>
</dbReference>
<dbReference type="GO" id="GO:0016579">
    <property type="term" value="P:protein deubiquitination"/>
    <property type="evidence" value="ECO:0007669"/>
    <property type="project" value="InterPro"/>
</dbReference>
<dbReference type="GO" id="GO:0006508">
    <property type="term" value="P:proteolysis"/>
    <property type="evidence" value="ECO:0007669"/>
    <property type="project" value="UniProtKB-KW"/>
</dbReference>
<dbReference type="GO" id="GO:0042981">
    <property type="term" value="P:regulation of apoptotic process"/>
    <property type="evidence" value="ECO:0000318"/>
    <property type="project" value="GO_Central"/>
</dbReference>
<dbReference type="GO" id="GO:0031647">
    <property type="term" value="P:regulation of protein stability"/>
    <property type="evidence" value="ECO:0000318"/>
    <property type="project" value="GO_Central"/>
</dbReference>
<dbReference type="CDD" id="cd02661">
    <property type="entry name" value="Peptidase_C19E"/>
    <property type="match status" value="1"/>
</dbReference>
<dbReference type="FunFam" id="3.90.70.10:FF:000070">
    <property type="entry name" value="Ubiquitin carboxyl-terminal hydrolase 17-like protein 17"/>
    <property type="match status" value="1"/>
</dbReference>
<dbReference type="Gene3D" id="3.90.70.10">
    <property type="entry name" value="Cysteine proteinases"/>
    <property type="match status" value="1"/>
</dbReference>
<dbReference type="InterPro" id="IPR038765">
    <property type="entry name" value="Papain-like_cys_pep_sf"/>
</dbReference>
<dbReference type="InterPro" id="IPR050164">
    <property type="entry name" value="Peptidase_C19"/>
</dbReference>
<dbReference type="InterPro" id="IPR001394">
    <property type="entry name" value="Peptidase_C19_UCH"/>
</dbReference>
<dbReference type="InterPro" id="IPR018200">
    <property type="entry name" value="USP_CS"/>
</dbReference>
<dbReference type="InterPro" id="IPR028889">
    <property type="entry name" value="USP_dom"/>
</dbReference>
<dbReference type="PANTHER" id="PTHR24006:SF651">
    <property type="entry name" value="INACTIVE UBIQUITIN CARBOXYL-TERMINAL HYDROLASE 17-LIKE PROTEIN 4-RELATED"/>
    <property type="match status" value="1"/>
</dbReference>
<dbReference type="PANTHER" id="PTHR24006">
    <property type="entry name" value="UBIQUITIN CARBOXYL-TERMINAL HYDROLASE"/>
    <property type="match status" value="1"/>
</dbReference>
<dbReference type="Pfam" id="PF00443">
    <property type="entry name" value="UCH"/>
    <property type="match status" value="1"/>
</dbReference>
<dbReference type="SUPFAM" id="SSF54001">
    <property type="entry name" value="Cysteine proteinases"/>
    <property type="match status" value="1"/>
</dbReference>
<dbReference type="PROSITE" id="PS00973">
    <property type="entry name" value="USP_2"/>
    <property type="match status" value="1"/>
</dbReference>
<dbReference type="PROSITE" id="PS50235">
    <property type="entry name" value="USP_3"/>
    <property type="match status" value="1"/>
</dbReference>
<comment type="function">
    <text evidence="1">Deubiquitinating enzyme that removes conjugated ubiquitin from specific proteins to regulate different cellular processes that may include cell proliferation, progression through the cell cycle, apoptosis, cell migration, and the cellular response to viral infection.</text>
</comment>
<comment type="catalytic activity">
    <reaction>
        <text>Thiol-dependent hydrolysis of ester, thioester, amide, peptide and isopeptide bonds formed by the C-terminal Gly of ubiquitin (a 76-residue protein attached to proteins as an intracellular targeting signal).</text>
        <dbReference type="EC" id="3.4.19.12"/>
    </reaction>
</comment>
<comment type="subcellular location">
    <subcellularLocation>
        <location evidence="1">Nucleus</location>
    </subcellularLocation>
    <subcellularLocation>
        <location evidence="1">Endoplasmic reticulum</location>
    </subcellularLocation>
</comment>
<comment type="similarity">
    <text evidence="4">Belongs to the peptidase C19 family. USP17 subfamily.</text>
</comment>
<comment type="caution">
    <text evidence="4">The RS447 megasatellite DNA is a highly polymorphic conserved tandem repetitive sequence which contains a copy of the USP17 gene. It is present with an interindividual variation in copy number, ranging from 20 to 103, and can be found in the genome both on chromosome 4 and chromosome 8. The high similarity between the UPS17-like genes makes impossible to clearly assign data to one of the genes of the family. Oligonucleotides designed in RNAi experiments are for instance not specific of a given UPS17-like gene.</text>
</comment>
<name>U17L1_HUMAN</name>
<gene>
    <name type="primary">USP17L1</name>
    <name type="synonym">USP17L</name>
    <name type="synonym">USP17L1P</name>
</gene>
<organism>
    <name type="scientific">Homo sapiens</name>
    <name type="common">Human</name>
    <dbReference type="NCBI Taxonomy" id="9606"/>
    <lineage>
        <taxon>Eukaryota</taxon>
        <taxon>Metazoa</taxon>
        <taxon>Chordata</taxon>
        <taxon>Craniata</taxon>
        <taxon>Vertebrata</taxon>
        <taxon>Euteleostomi</taxon>
        <taxon>Mammalia</taxon>
        <taxon>Eutheria</taxon>
        <taxon>Euarchontoglires</taxon>
        <taxon>Primates</taxon>
        <taxon>Haplorrhini</taxon>
        <taxon>Catarrhini</taxon>
        <taxon>Hominidae</taxon>
        <taxon>Homo</taxon>
    </lineage>
</organism>
<proteinExistence type="inferred from homology"/>
<feature type="chain" id="PRO_0000253963" description="Ubiquitin carboxyl-terminal hydrolase 17-like protein 1">
    <location>
        <begin position="1"/>
        <end position="530"/>
    </location>
</feature>
<feature type="domain" description="USP">
    <location>
        <begin position="80"/>
        <end position="375"/>
    </location>
</feature>
<feature type="region of interest" description="Disordered" evidence="3">
    <location>
        <begin position="382"/>
        <end position="411"/>
    </location>
</feature>
<feature type="compositionally biased region" description="Basic and acidic residues" evidence="3">
    <location>
        <begin position="382"/>
        <end position="392"/>
    </location>
</feature>
<feature type="compositionally biased region" description="Basic and acidic residues" evidence="3">
    <location>
        <begin position="398"/>
        <end position="411"/>
    </location>
</feature>
<feature type="active site" description="Nucleophile" evidence="2">
    <location>
        <position position="89"/>
    </location>
</feature>
<feature type="active site" description="Proton acceptor" evidence="2">
    <location>
        <position position="334"/>
    </location>
</feature>
<keyword id="KW-0053">Apoptosis</keyword>
<keyword id="KW-0256">Endoplasmic reticulum</keyword>
<keyword id="KW-0378">Hydrolase</keyword>
<keyword id="KW-0539">Nucleus</keyword>
<keyword id="KW-0645">Protease</keyword>
<keyword id="KW-1185">Reference proteome</keyword>
<keyword id="KW-0788">Thiol protease</keyword>
<keyword id="KW-0833">Ubl conjugation pathway</keyword>
<sequence length="530" mass="59590">MGDDSLYLGGEWQFNHFSKLTSSRPDAAFAEIQRTSLPEKSPLSSETRVDLCDDLAPVARQLAPREKLPLSSRRPAAVGAGLQNMGNTCYENASLQCLTYTLPLANYMLSREHSQTCQRPKCCMLCTMQAHITWALHSPGHVIQPSQALAAGFHRGKQEDVHEFLMFTVDAMKKACLPGHKQVDHHCKDTTLIHQIFGGCWRSQIKCLHCHGISDTFDPYLDIALDIQAAQSVKQALEQLVKPEELNGENAYHCGLCLQRAPASNTLTLHTSAKVLILVLKRFSDVAGNKLAKNVQYPECLDMQPYMSQQNTGPLVYVLYAVLVHAGWSCHDGHYFSYVKAQEVQWYKMDDAEVTVCSIISVLSQQAYVLFYIQKSEWERHSESVSRGREPRALGAEDTDRRAKQGELKRDHPCLQAPELDEHLVERATQESTLDHWKFLQEQNKTKPEFNVGKVEGTLPPNALVIHQSKYKCGMKNHHPEQQSSLLNLSSTTRTDQESMNTGTLASLQGRTRRAKGKNKHSKRALLVCQ</sequence>